<sequence length="215" mass="23142">MRRVLITGFEPFGGERINPSWEVVKQMNDLMMGGVRIVARQLPCAFGEALTALNTAIDDVQPVLVLAIGQAGGRADITIERVAINVDDARIPDNLGNQPVDQPIIQEGPAAYFTRLPIKAMVQGIREAGIPASVSQTAGTYVCNHVMYGLLHRLNQFNNEVKGGFIHIPYLPEQAVDHPGAPSMSAQSVLVALELAISIALQIEHDLHITGGAVH</sequence>
<reference key="1">
    <citation type="journal article" date="2006" name="J. Bacteriol.">
        <title>Complete genome sequence of Yersinia pestis strains Antiqua and Nepal516: evidence of gene reduction in an emerging pathogen.</title>
        <authorList>
            <person name="Chain P.S.G."/>
            <person name="Hu P."/>
            <person name="Malfatti S.A."/>
            <person name="Radnedge L."/>
            <person name="Larimer F."/>
            <person name="Vergez L.M."/>
            <person name="Worsham P."/>
            <person name="Chu M.C."/>
            <person name="Andersen G.L."/>
        </authorList>
    </citation>
    <scope>NUCLEOTIDE SEQUENCE [LARGE SCALE GENOMIC DNA]</scope>
    <source>
        <strain>Nepal516</strain>
    </source>
</reference>
<reference key="2">
    <citation type="submission" date="2009-04" db="EMBL/GenBank/DDBJ databases">
        <title>Yersinia pestis Nepal516A whole genome shotgun sequencing project.</title>
        <authorList>
            <person name="Plunkett G. III"/>
            <person name="Anderson B.D."/>
            <person name="Baumler D.J."/>
            <person name="Burland V."/>
            <person name="Cabot E.L."/>
            <person name="Glasner J.D."/>
            <person name="Mau B."/>
            <person name="Neeno-Eckwall E."/>
            <person name="Perna N.T."/>
            <person name="Munk A.C."/>
            <person name="Tapia R."/>
            <person name="Green L.D."/>
            <person name="Rogers Y.C."/>
            <person name="Detter J.C."/>
            <person name="Bruce D.C."/>
            <person name="Brettin T.S."/>
        </authorList>
    </citation>
    <scope>NUCLEOTIDE SEQUENCE [LARGE SCALE GENOMIC DNA]</scope>
    <source>
        <strain>Nepal516</strain>
    </source>
</reference>
<feature type="chain" id="PRO_1000050157" description="Pyrrolidone-carboxylate peptidase">
    <location>
        <begin position="1"/>
        <end position="215"/>
    </location>
</feature>
<feature type="active site" evidence="1">
    <location>
        <position position="80"/>
    </location>
</feature>
<feature type="active site" evidence="1">
    <location>
        <position position="143"/>
    </location>
</feature>
<feature type="active site" evidence="1">
    <location>
        <position position="167"/>
    </location>
</feature>
<protein>
    <recommendedName>
        <fullName evidence="1">Pyrrolidone-carboxylate peptidase</fullName>
        <ecNumber evidence="1">3.4.19.3</ecNumber>
    </recommendedName>
    <alternativeName>
        <fullName evidence="1">5-oxoprolyl-peptidase</fullName>
    </alternativeName>
    <alternativeName>
        <fullName evidence="1">Pyroglutamyl-peptidase I</fullName>
        <shortName evidence="1">PGP-I</shortName>
        <shortName evidence="1">Pyrase</shortName>
    </alternativeName>
</protein>
<dbReference type="EC" id="3.4.19.3" evidence="1"/>
<dbReference type="EMBL" id="CP000305">
    <property type="protein sequence ID" value="ABG17521.1"/>
    <property type="molecule type" value="Genomic_DNA"/>
</dbReference>
<dbReference type="EMBL" id="ACNQ01000008">
    <property type="protein sequence ID" value="EEO77625.1"/>
    <property type="molecule type" value="Genomic_DNA"/>
</dbReference>
<dbReference type="RefSeq" id="WP_002209662.1">
    <property type="nucleotide sequence ID" value="NZ_ACNQ01000008.1"/>
</dbReference>
<dbReference type="SMR" id="Q1CKF9"/>
<dbReference type="MEROPS" id="C15.001"/>
<dbReference type="GeneID" id="57975988"/>
<dbReference type="KEGG" id="ypn:YPN_1191"/>
<dbReference type="HOGENOM" id="CLU_043960_4_0_6"/>
<dbReference type="Proteomes" id="UP000008936">
    <property type="component" value="Chromosome"/>
</dbReference>
<dbReference type="GO" id="GO:0005829">
    <property type="term" value="C:cytosol"/>
    <property type="evidence" value="ECO:0007669"/>
    <property type="project" value="InterPro"/>
</dbReference>
<dbReference type="GO" id="GO:0016920">
    <property type="term" value="F:pyroglutamyl-peptidase activity"/>
    <property type="evidence" value="ECO:0007669"/>
    <property type="project" value="UniProtKB-UniRule"/>
</dbReference>
<dbReference type="GO" id="GO:0006508">
    <property type="term" value="P:proteolysis"/>
    <property type="evidence" value="ECO:0007669"/>
    <property type="project" value="UniProtKB-KW"/>
</dbReference>
<dbReference type="CDD" id="cd00501">
    <property type="entry name" value="Peptidase_C15"/>
    <property type="match status" value="1"/>
</dbReference>
<dbReference type="FunFam" id="3.40.630.20:FF:000001">
    <property type="entry name" value="Pyrrolidone-carboxylate peptidase"/>
    <property type="match status" value="1"/>
</dbReference>
<dbReference type="Gene3D" id="3.40.630.20">
    <property type="entry name" value="Peptidase C15, pyroglutamyl peptidase I-like"/>
    <property type="match status" value="1"/>
</dbReference>
<dbReference type="HAMAP" id="MF_00417">
    <property type="entry name" value="Pyrrolid_peptidase"/>
    <property type="match status" value="1"/>
</dbReference>
<dbReference type="InterPro" id="IPR000816">
    <property type="entry name" value="Peptidase_C15"/>
</dbReference>
<dbReference type="InterPro" id="IPR016125">
    <property type="entry name" value="Peptidase_C15-like"/>
</dbReference>
<dbReference type="InterPro" id="IPR036440">
    <property type="entry name" value="Peptidase_C15-like_sf"/>
</dbReference>
<dbReference type="InterPro" id="IPR029762">
    <property type="entry name" value="PGP-I_bact-type"/>
</dbReference>
<dbReference type="InterPro" id="IPR033694">
    <property type="entry name" value="PGPEP1_Cys_AS"/>
</dbReference>
<dbReference type="InterPro" id="IPR033693">
    <property type="entry name" value="PGPEP1_Glu_AS"/>
</dbReference>
<dbReference type="NCBIfam" id="NF009676">
    <property type="entry name" value="PRK13197.1"/>
    <property type="match status" value="1"/>
</dbReference>
<dbReference type="NCBIfam" id="TIGR00504">
    <property type="entry name" value="pyro_pdase"/>
    <property type="match status" value="1"/>
</dbReference>
<dbReference type="PANTHER" id="PTHR23402">
    <property type="entry name" value="PROTEASE FAMILY C15 PYROGLUTAMYL-PEPTIDASE I-RELATED"/>
    <property type="match status" value="1"/>
</dbReference>
<dbReference type="PANTHER" id="PTHR23402:SF1">
    <property type="entry name" value="PYROGLUTAMYL-PEPTIDASE I"/>
    <property type="match status" value="1"/>
</dbReference>
<dbReference type="Pfam" id="PF01470">
    <property type="entry name" value="Peptidase_C15"/>
    <property type="match status" value="1"/>
</dbReference>
<dbReference type="PIRSF" id="PIRSF015592">
    <property type="entry name" value="Prld-crbxl_pptds"/>
    <property type="match status" value="1"/>
</dbReference>
<dbReference type="PRINTS" id="PR00706">
    <property type="entry name" value="PYROGLUPTASE"/>
</dbReference>
<dbReference type="SUPFAM" id="SSF53182">
    <property type="entry name" value="Pyrrolidone carboxyl peptidase (pyroglutamate aminopeptidase)"/>
    <property type="match status" value="1"/>
</dbReference>
<dbReference type="PROSITE" id="PS01334">
    <property type="entry name" value="PYRASE_CYS"/>
    <property type="match status" value="1"/>
</dbReference>
<dbReference type="PROSITE" id="PS01333">
    <property type="entry name" value="PYRASE_GLU"/>
    <property type="match status" value="1"/>
</dbReference>
<accession>Q1CKF9</accession>
<accession>C4GRD4</accession>
<keyword id="KW-0963">Cytoplasm</keyword>
<keyword id="KW-0378">Hydrolase</keyword>
<keyword id="KW-0645">Protease</keyword>
<keyword id="KW-0788">Thiol protease</keyword>
<evidence type="ECO:0000255" key="1">
    <source>
        <dbReference type="HAMAP-Rule" id="MF_00417"/>
    </source>
</evidence>
<gene>
    <name evidence="1" type="primary">pcp</name>
    <name type="ordered locus">YPN_1191</name>
    <name type="ORF">YP516_1302</name>
</gene>
<name>PCP_YERPN</name>
<proteinExistence type="inferred from homology"/>
<comment type="function">
    <text evidence="1">Removes 5-oxoproline from various penultimate amino acid residues except L-proline.</text>
</comment>
<comment type="catalytic activity">
    <reaction evidence="1">
        <text>Release of an N-terminal pyroglutamyl group from a polypeptide, the second amino acid generally not being Pro.</text>
        <dbReference type="EC" id="3.4.19.3"/>
    </reaction>
</comment>
<comment type="subunit">
    <text evidence="1">Homotetramer.</text>
</comment>
<comment type="subcellular location">
    <subcellularLocation>
        <location evidence="1">Cytoplasm</location>
    </subcellularLocation>
</comment>
<comment type="similarity">
    <text evidence="1">Belongs to the peptidase C15 family.</text>
</comment>
<organism>
    <name type="scientific">Yersinia pestis bv. Antiqua (strain Nepal516)</name>
    <dbReference type="NCBI Taxonomy" id="377628"/>
    <lineage>
        <taxon>Bacteria</taxon>
        <taxon>Pseudomonadati</taxon>
        <taxon>Pseudomonadota</taxon>
        <taxon>Gammaproteobacteria</taxon>
        <taxon>Enterobacterales</taxon>
        <taxon>Yersiniaceae</taxon>
        <taxon>Yersinia</taxon>
    </lineage>
</organism>